<feature type="chain" id="PRO_0000130071" description="Small ribosomal subunit protein uS3">
    <location>
        <begin position="1"/>
        <end position="220"/>
    </location>
</feature>
<feature type="domain" description="KH type-2" evidence="1">
    <location>
        <begin position="39"/>
        <end position="107"/>
    </location>
</feature>
<keyword id="KW-1185">Reference proteome</keyword>
<keyword id="KW-0687">Ribonucleoprotein</keyword>
<keyword id="KW-0689">Ribosomal protein</keyword>
<keyword id="KW-0694">RNA-binding</keyword>
<keyword id="KW-0699">rRNA-binding</keyword>
<organism>
    <name type="scientific">Shouchella clausii (strain KSM-K16)</name>
    <name type="common">Alkalihalobacillus clausii</name>
    <dbReference type="NCBI Taxonomy" id="66692"/>
    <lineage>
        <taxon>Bacteria</taxon>
        <taxon>Bacillati</taxon>
        <taxon>Bacillota</taxon>
        <taxon>Bacilli</taxon>
        <taxon>Bacillales</taxon>
        <taxon>Bacillaceae</taxon>
        <taxon>Shouchella</taxon>
    </lineage>
</organism>
<comment type="function">
    <text evidence="1">Binds the lower part of the 30S subunit head. Binds mRNA in the 70S ribosome, positioning it for translation.</text>
</comment>
<comment type="subunit">
    <text evidence="1">Part of the 30S ribosomal subunit. Forms a tight complex with proteins S10 and S14.</text>
</comment>
<comment type="similarity">
    <text evidence="1">Belongs to the universal ribosomal protein uS3 family.</text>
</comment>
<evidence type="ECO:0000255" key="1">
    <source>
        <dbReference type="HAMAP-Rule" id="MF_01309"/>
    </source>
</evidence>
<evidence type="ECO:0000305" key="2"/>
<proteinExistence type="inferred from homology"/>
<protein>
    <recommendedName>
        <fullName evidence="1">Small ribosomal subunit protein uS3</fullName>
    </recommendedName>
    <alternativeName>
        <fullName evidence="2">30S ribosomal protein S3</fullName>
    </alternativeName>
</protein>
<sequence length="220" mass="24187">MGQKVNPVGLRVGVIRDWDSKWYAGKKDYADLLHEDIAIREHVEGRLKDASVSKVEIERAANRVNITISTAKPGMVIGKGGSEVEALRKSLNELTGKRVHINISEIKQADLDAKLVAENIARQLENRISFRRAMKQAIQRTMRAGAKGIKTQVSGRLGGADIARAEHYSEGTVPLHTLRADIDYGTAEADTTYGKIGVKIWVYRGEVLPTKGTNKEEGGN</sequence>
<accession>Q5WLQ6</accession>
<name>RS3_SHOC1</name>
<reference key="1">
    <citation type="submission" date="2003-10" db="EMBL/GenBank/DDBJ databases">
        <title>The complete genome sequence of the alkaliphilic Bacillus clausii KSM-K16.</title>
        <authorList>
            <person name="Takaki Y."/>
            <person name="Kageyama Y."/>
            <person name="Shimamura S."/>
            <person name="Suzuki H."/>
            <person name="Nishi S."/>
            <person name="Hatada Y."/>
            <person name="Kawai S."/>
            <person name="Ito S."/>
            <person name="Horikoshi K."/>
        </authorList>
    </citation>
    <scope>NUCLEOTIDE SEQUENCE [LARGE SCALE GENOMIC DNA]</scope>
    <source>
        <strain>KSM-K16</strain>
    </source>
</reference>
<dbReference type="EMBL" id="AP006627">
    <property type="protein sequence ID" value="BAD62699.1"/>
    <property type="molecule type" value="Genomic_DNA"/>
</dbReference>
<dbReference type="RefSeq" id="WP_011245020.1">
    <property type="nucleotide sequence ID" value="NC_006582.1"/>
</dbReference>
<dbReference type="SMR" id="Q5WLQ6"/>
<dbReference type="STRING" id="66692.ABC0156"/>
<dbReference type="GeneID" id="86924192"/>
<dbReference type="KEGG" id="bcl:ABC0156"/>
<dbReference type="eggNOG" id="COG0092">
    <property type="taxonomic scope" value="Bacteria"/>
</dbReference>
<dbReference type="HOGENOM" id="CLU_058591_0_2_9"/>
<dbReference type="OrthoDB" id="9806396at2"/>
<dbReference type="Proteomes" id="UP000001168">
    <property type="component" value="Chromosome"/>
</dbReference>
<dbReference type="GO" id="GO:0022627">
    <property type="term" value="C:cytosolic small ribosomal subunit"/>
    <property type="evidence" value="ECO:0007669"/>
    <property type="project" value="TreeGrafter"/>
</dbReference>
<dbReference type="GO" id="GO:0003729">
    <property type="term" value="F:mRNA binding"/>
    <property type="evidence" value="ECO:0007669"/>
    <property type="project" value="UniProtKB-UniRule"/>
</dbReference>
<dbReference type="GO" id="GO:0019843">
    <property type="term" value="F:rRNA binding"/>
    <property type="evidence" value="ECO:0007669"/>
    <property type="project" value="UniProtKB-UniRule"/>
</dbReference>
<dbReference type="GO" id="GO:0003735">
    <property type="term" value="F:structural constituent of ribosome"/>
    <property type="evidence" value="ECO:0007669"/>
    <property type="project" value="InterPro"/>
</dbReference>
<dbReference type="GO" id="GO:0006412">
    <property type="term" value="P:translation"/>
    <property type="evidence" value="ECO:0007669"/>
    <property type="project" value="UniProtKB-UniRule"/>
</dbReference>
<dbReference type="CDD" id="cd02412">
    <property type="entry name" value="KH-II_30S_S3"/>
    <property type="match status" value="1"/>
</dbReference>
<dbReference type="FunFam" id="3.30.1140.32:FF:000001">
    <property type="entry name" value="30S ribosomal protein S3"/>
    <property type="match status" value="1"/>
</dbReference>
<dbReference type="FunFam" id="3.30.300.20:FF:000001">
    <property type="entry name" value="30S ribosomal protein S3"/>
    <property type="match status" value="1"/>
</dbReference>
<dbReference type="Gene3D" id="3.30.300.20">
    <property type="match status" value="1"/>
</dbReference>
<dbReference type="Gene3D" id="3.30.1140.32">
    <property type="entry name" value="Ribosomal protein S3, C-terminal domain"/>
    <property type="match status" value="1"/>
</dbReference>
<dbReference type="HAMAP" id="MF_01309_B">
    <property type="entry name" value="Ribosomal_uS3_B"/>
    <property type="match status" value="1"/>
</dbReference>
<dbReference type="InterPro" id="IPR004087">
    <property type="entry name" value="KH_dom"/>
</dbReference>
<dbReference type="InterPro" id="IPR015946">
    <property type="entry name" value="KH_dom-like_a/b"/>
</dbReference>
<dbReference type="InterPro" id="IPR004044">
    <property type="entry name" value="KH_dom_type_2"/>
</dbReference>
<dbReference type="InterPro" id="IPR009019">
    <property type="entry name" value="KH_sf_prok-type"/>
</dbReference>
<dbReference type="InterPro" id="IPR036419">
    <property type="entry name" value="Ribosomal_S3_C_sf"/>
</dbReference>
<dbReference type="InterPro" id="IPR005704">
    <property type="entry name" value="Ribosomal_uS3_bac-typ"/>
</dbReference>
<dbReference type="InterPro" id="IPR001351">
    <property type="entry name" value="Ribosomal_uS3_C"/>
</dbReference>
<dbReference type="InterPro" id="IPR018280">
    <property type="entry name" value="Ribosomal_uS3_CS"/>
</dbReference>
<dbReference type="NCBIfam" id="TIGR01009">
    <property type="entry name" value="rpsC_bact"/>
    <property type="match status" value="1"/>
</dbReference>
<dbReference type="PANTHER" id="PTHR11760">
    <property type="entry name" value="30S/40S RIBOSOMAL PROTEIN S3"/>
    <property type="match status" value="1"/>
</dbReference>
<dbReference type="PANTHER" id="PTHR11760:SF19">
    <property type="entry name" value="SMALL RIBOSOMAL SUBUNIT PROTEIN US3C"/>
    <property type="match status" value="1"/>
</dbReference>
<dbReference type="Pfam" id="PF07650">
    <property type="entry name" value="KH_2"/>
    <property type="match status" value="1"/>
</dbReference>
<dbReference type="Pfam" id="PF00189">
    <property type="entry name" value="Ribosomal_S3_C"/>
    <property type="match status" value="1"/>
</dbReference>
<dbReference type="SMART" id="SM00322">
    <property type="entry name" value="KH"/>
    <property type="match status" value="1"/>
</dbReference>
<dbReference type="SUPFAM" id="SSF54814">
    <property type="entry name" value="Prokaryotic type KH domain (KH-domain type II)"/>
    <property type="match status" value="1"/>
</dbReference>
<dbReference type="SUPFAM" id="SSF54821">
    <property type="entry name" value="Ribosomal protein S3 C-terminal domain"/>
    <property type="match status" value="1"/>
</dbReference>
<dbReference type="PROSITE" id="PS50823">
    <property type="entry name" value="KH_TYPE_2"/>
    <property type="match status" value="1"/>
</dbReference>
<dbReference type="PROSITE" id="PS00548">
    <property type="entry name" value="RIBOSOMAL_S3"/>
    <property type="match status" value="1"/>
</dbReference>
<gene>
    <name evidence="1" type="primary">rpsC</name>
    <name type="ordered locus">ABC0156</name>
</gene>